<sequence length="230" mass="24349">MASTMTPYFGIVVSLIAYGIGTLLFKHSKGFFLFTPLFVAMVLGIVFLKVGNFTFEEYNTGGKMISFFLEPATIAFAIPLYKQVDKLKKYWWQILSAIVVGSICSVIVVFIVAKAIGLDTAVMNSMLPQAATTAIALPISESIGGIPAITSFAVIFNAVIVYALGALFLKTFRVKHPIAKGLALGTAGHALGVAVGIEMGEVEAAMASIAVTVVGVVTVVVIPMFMPFIG</sequence>
<accession>B7HGA1</accession>
<dbReference type="EMBL" id="CP001176">
    <property type="protein sequence ID" value="ACK58798.1"/>
    <property type="molecule type" value="Genomic_DNA"/>
</dbReference>
<dbReference type="RefSeq" id="WP_000168869.1">
    <property type="nucleotide sequence ID" value="NZ_VEHB01000004.1"/>
</dbReference>
<dbReference type="GeneID" id="93005687"/>
<dbReference type="KEGG" id="bcb:BCB4264_A5563"/>
<dbReference type="HOGENOM" id="CLU_082099_1_0_9"/>
<dbReference type="Proteomes" id="UP000007096">
    <property type="component" value="Chromosome"/>
</dbReference>
<dbReference type="GO" id="GO:0005886">
    <property type="term" value="C:plasma membrane"/>
    <property type="evidence" value="ECO:0007669"/>
    <property type="project" value="UniProtKB-SubCell"/>
</dbReference>
<dbReference type="GO" id="GO:0019835">
    <property type="term" value="P:cytolysis"/>
    <property type="evidence" value="ECO:0007669"/>
    <property type="project" value="UniProtKB-UniRule"/>
</dbReference>
<dbReference type="GO" id="GO:0031640">
    <property type="term" value="P:killing of cells of another organism"/>
    <property type="evidence" value="ECO:0007669"/>
    <property type="project" value="UniProtKB-KW"/>
</dbReference>
<dbReference type="GO" id="GO:0012501">
    <property type="term" value="P:programmed cell death"/>
    <property type="evidence" value="ECO:0007669"/>
    <property type="project" value="UniProtKB-UniRule"/>
</dbReference>
<dbReference type="HAMAP" id="MF_01142">
    <property type="entry name" value="LrgB"/>
    <property type="match status" value="1"/>
</dbReference>
<dbReference type="InterPro" id="IPR024891">
    <property type="entry name" value="Antiholin-like_LrgB"/>
</dbReference>
<dbReference type="InterPro" id="IPR007300">
    <property type="entry name" value="CidB/LrgB"/>
</dbReference>
<dbReference type="NCBIfam" id="NF003291">
    <property type="entry name" value="PRK04288.1"/>
    <property type="match status" value="1"/>
</dbReference>
<dbReference type="PANTHER" id="PTHR30249:SF0">
    <property type="entry name" value="PLASTIDAL GLYCOLATE_GLYCERATE TRANSLOCATOR 1, CHLOROPLASTIC"/>
    <property type="match status" value="1"/>
</dbReference>
<dbReference type="PANTHER" id="PTHR30249">
    <property type="entry name" value="PUTATIVE SEROTONIN TRANSPORTER"/>
    <property type="match status" value="1"/>
</dbReference>
<dbReference type="Pfam" id="PF04172">
    <property type="entry name" value="LrgB"/>
    <property type="match status" value="1"/>
</dbReference>
<name>LRGB_BACC4</name>
<evidence type="ECO:0000255" key="1">
    <source>
        <dbReference type="HAMAP-Rule" id="MF_01142"/>
    </source>
</evidence>
<comment type="function">
    <text evidence="1">Inhibits the expression or activity of extracellular murein hydrolases by interacting, possibly with LrgA, with the holin-like protein CidA. The LrgAB and CidA proteins may affect the proton motive force of the membrane. May be involved in programmed cell death (PCD), possibly triggering PCD in response to antibiotics and environmental stresses.</text>
</comment>
<comment type="subcellular location">
    <subcellularLocation>
        <location evidence="1">Cell membrane</location>
        <topology evidence="1">Multi-pass membrane protein</topology>
    </subcellularLocation>
</comment>
<comment type="similarity">
    <text evidence="1">Belongs to the CidB/LrgB family. LrgB subfamily.</text>
</comment>
<keyword id="KW-1003">Cell membrane</keyword>
<keyword id="KW-0204">Cytolysis</keyword>
<keyword id="KW-0472">Membrane</keyword>
<keyword id="KW-0812">Transmembrane</keyword>
<keyword id="KW-1133">Transmembrane helix</keyword>
<feature type="chain" id="PRO_1000137350" description="Antiholin-like protein LrgB">
    <location>
        <begin position="1"/>
        <end position="230"/>
    </location>
</feature>
<feature type="transmembrane region" description="Helical" evidence="1">
    <location>
        <begin position="5"/>
        <end position="25"/>
    </location>
</feature>
<feature type="transmembrane region" description="Helical" evidence="1">
    <location>
        <begin position="30"/>
        <end position="50"/>
    </location>
</feature>
<feature type="transmembrane region" description="Helical" evidence="1">
    <location>
        <begin position="61"/>
        <end position="81"/>
    </location>
</feature>
<feature type="transmembrane region" description="Helical" evidence="1">
    <location>
        <begin position="92"/>
        <end position="112"/>
    </location>
</feature>
<feature type="transmembrane region" description="Helical" evidence="1">
    <location>
        <begin position="149"/>
        <end position="169"/>
    </location>
</feature>
<feature type="transmembrane region" description="Helical" evidence="1">
    <location>
        <begin position="177"/>
        <end position="197"/>
    </location>
</feature>
<feature type="transmembrane region" description="Helical" evidence="1">
    <location>
        <begin position="209"/>
        <end position="229"/>
    </location>
</feature>
<gene>
    <name evidence="1" type="primary">lrgB</name>
    <name type="ordered locus">BCB4264_A5563</name>
</gene>
<organism>
    <name type="scientific">Bacillus cereus (strain B4264)</name>
    <dbReference type="NCBI Taxonomy" id="405532"/>
    <lineage>
        <taxon>Bacteria</taxon>
        <taxon>Bacillati</taxon>
        <taxon>Bacillota</taxon>
        <taxon>Bacilli</taxon>
        <taxon>Bacillales</taxon>
        <taxon>Bacillaceae</taxon>
        <taxon>Bacillus</taxon>
        <taxon>Bacillus cereus group</taxon>
    </lineage>
</organism>
<proteinExistence type="inferred from homology"/>
<protein>
    <recommendedName>
        <fullName evidence="1">Antiholin-like protein LrgB</fullName>
    </recommendedName>
</protein>
<reference key="1">
    <citation type="submission" date="2008-10" db="EMBL/GenBank/DDBJ databases">
        <title>Genome sequence of Bacillus cereus B4264.</title>
        <authorList>
            <person name="Dodson R.J."/>
            <person name="Durkin A.S."/>
            <person name="Rosovitz M.J."/>
            <person name="Rasko D.A."/>
            <person name="Hoffmaster A."/>
            <person name="Ravel J."/>
            <person name="Sutton G."/>
        </authorList>
    </citation>
    <scope>NUCLEOTIDE SEQUENCE [LARGE SCALE GENOMIC DNA]</scope>
    <source>
        <strain>B4264</strain>
    </source>
</reference>